<gene>
    <name evidence="1" type="primary">tyrS</name>
    <name type="ordered locus">PA0546</name>
</gene>
<reference key="1">
    <citation type="journal article" date="2008" name="J. Bacteriol.">
        <title>Comparative genome analysis of 'Candidatus Phytoplasma australiense' (subgroup tuf-Australia I; rp-A) and 'Ca. Phytoplasma asteris' strains OY-M and AY-WB.</title>
        <authorList>
            <person name="Tran-Nguyen L.T."/>
            <person name="Kube M."/>
            <person name="Schneider B."/>
            <person name="Reinhardt R."/>
            <person name="Gibb K.S."/>
        </authorList>
    </citation>
    <scope>NUCLEOTIDE SEQUENCE [LARGE SCALE GENOMIC DNA]</scope>
</reference>
<name>SYY_PHYAS</name>
<sequence>MSFYEELKWRNLIKDSSDEKELKNLLDCKKIKFYCGFDPTSDSLTVGHLVQLTMMSLLEKQGHSPFILVGGATGLIGDPKETEERKLLSLETSLQNAKSLETQLKKILFQKKITFLNNYEWFSQLDIITFLRKYGKLFNINYMLNKQTVAKRLSSGISFTEFTYMILQSLDFHHLYKNYGVQLQLGGSDQWGNITSGLELIRKLETTSHAFGLSTPLLLNANGTKFGKSEQDVLWLDPQKTSPYKIYQYFLNLADEEVVNCLKQLTLIPKEEILELEKATLQTPQKRLAQKALANNIVNLIYSQKVLQECHKTNEVLFLNKKKESFQEADFTLLNKTLFSYETSLVSIPLSEALVKTQLTTSKREAREFIQRGSIQIFNEKIKNPDYLIDKKNTLFNKYVLLKKGKKNNSLIILN</sequence>
<organism>
    <name type="scientific">Phytoplasma australiense</name>
    <dbReference type="NCBI Taxonomy" id="59748"/>
    <lineage>
        <taxon>Bacteria</taxon>
        <taxon>Bacillati</taxon>
        <taxon>Mycoplasmatota</taxon>
        <taxon>Mollicutes</taxon>
        <taxon>Acholeplasmatales</taxon>
        <taxon>Acholeplasmataceae</taxon>
        <taxon>Candidatus Phytoplasma</taxon>
        <taxon>16SrXII (Stolbur group)</taxon>
    </lineage>
</organism>
<comment type="function">
    <text evidence="1">Catalyzes the attachment of tyrosine to tRNA(Tyr) in a two-step reaction: tyrosine is first activated by ATP to form Tyr-AMP and then transferred to the acceptor end of tRNA(Tyr).</text>
</comment>
<comment type="catalytic activity">
    <reaction evidence="1">
        <text>tRNA(Tyr) + L-tyrosine + ATP = L-tyrosyl-tRNA(Tyr) + AMP + diphosphate + H(+)</text>
        <dbReference type="Rhea" id="RHEA:10220"/>
        <dbReference type="Rhea" id="RHEA-COMP:9706"/>
        <dbReference type="Rhea" id="RHEA-COMP:9707"/>
        <dbReference type="ChEBI" id="CHEBI:15378"/>
        <dbReference type="ChEBI" id="CHEBI:30616"/>
        <dbReference type="ChEBI" id="CHEBI:33019"/>
        <dbReference type="ChEBI" id="CHEBI:58315"/>
        <dbReference type="ChEBI" id="CHEBI:78442"/>
        <dbReference type="ChEBI" id="CHEBI:78536"/>
        <dbReference type="ChEBI" id="CHEBI:456215"/>
        <dbReference type="EC" id="6.1.1.1"/>
    </reaction>
</comment>
<comment type="subunit">
    <text evidence="1">Homodimer.</text>
</comment>
<comment type="subcellular location">
    <subcellularLocation>
        <location evidence="1">Cytoplasm</location>
    </subcellularLocation>
</comment>
<comment type="similarity">
    <text evidence="1">Belongs to the class-I aminoacyl-tRNA synthetase family. TyrS type 1 subfamily.</text>
</comment>
<feature type="chain" id="PRO_1000189316" description="Tyrosine--tRNA ligase">
    <location>
        <begin position="1"/>
        <end position="415"/>
    </location>
</feature>
<feature type="domain" description="S4 RNA-binding" evidence="1">
    <location>
        <begin position="348"/>
        <end position="414"/>
    </location>
</feature>
<feature type="short sequence motif" description="'HIGH' region">
    <location>
        <begin position="39"/>
        <end position="48"/>
    </location>
</feature>
<feature type="short sequence motif" description="'KMSKS' region">
    <location>
        <begin position="225"/>
        <end position="229"/>
    </location>
</feature>
<feature type="binding site" evidence="1">
    <location>
        <position position="34"/>
    </location>
    <ligand>
        <name>L-tyrosine</name>
        <dbReference type="ChEBI" id="CHEBI:58315"/>
    </ligand>
</feature>
<feature type="binding site" evidence="1">
    <location>
        <position position="164"/>
    </location>
    <ligand>
        <name>L-tyrosine</name>
        <dbReference type="ChEBI" id="CHEBI:58315"/>
    </ligand>
</feature>
<feature type="binding site" evidence="1">
    <location>
        <position position="168"/>
    </location>
    <ligand>
        <name>L-tyrosine</name>
        <dbReference type="ChEBI" id="CHEBI:58315"/>
    </ligand>
</feature>
<feature type="binding site" evidence="1">
    <location>
        <position position="228"/>
    </location>
    <ligand>
        <name>ATP</name>
        <dbReference type="ChEBI" id="CHEBI:30616"/>
    </ligand>
</feature>
<dbReference type="EC" id="6.1.1.1" evidence="1"/>
<dbReference type="EMBL" id="AM422018">
    <property type="protein sequence ID" value="CAM11880.1"/>
    <property type="molecule type" value="Genomic_DNA"/>
</dbReference>
<dbReference type="SMR" id="B1VAA7"/>
<dbReference type="STRING" id="59748.PA0546"/>
<dbReference type="KEGG" id="pal:PA0546"/>
<dbReference type="eggNOG" id="COG0162">
    <property type="taxonomic scope" value="Bacteria"/>
</dbReference>
<dbReference type="Proteomes" id="UP000008323">
    <property type="component" value="Chromosome"/>
</dbReference>
<dbReference type="GO" id="GO:0005829">
    <property type="term" value="C:cytosol"/>
    <property type="evidence" value="ECO:0007669"/>
    <property type="project" value="TreeGrafter"/>
</dbReference>
<dbReference type="GO" id="GO:0005524">
    <property type="term" value="F:ATP binding"/>
    <property type="evidence" value="ECO:0007669"/>
    <property type="project" value="UniProtKB-UniRule"/>
</dbReference>
<dbReference type="GO" id="GO:0003723">
    <property type="term" value="F:RNA binding"/>
    <property type="evidence" value="ECO:0007669"/>
    <property type="project" value="UniProtKB-KW"/>
</dbReference>
<dbReference type="GO" id="GO:0004831">
    <property type="term" value="F:tyrosine-tRNA ligase activity"/>
    <property type="evidence" value="ECO:0007669"/>
    <property type="project" value="UniProtKB-UniRule"/>
</dbReference>
<dbReference type="GO" id="GO:0006437">
    <property type="term" value="P:tyrosyl-tRNA aminoacylation"/>
    <property type="evidence" value="ECO:0007669"/>
    <property type="project" value="UniProtKB-UniRule"/>
</dbReference>
<dbReference type="CDD" id="cd00805">
    <property type="entry name" value="TyrRS_core"/>
    <property type="match status" value="1"/>
</dbReference>
<dbReference type="FunFam" id="1.10.240.10:FF:000001">
    <property type="entry name" value="Tyrosine--tRNA ligase"/>
    <property type="match status" value="1"/>
</dbReference>
<dbReference type="Gene3D" id="3.40.50.620">
    <property type="entry name" value="HUPs"/>
    <property type="match status" value="1"/>
</dbReference>
<dbReference type="Gene3D" id="3.10.290.10">
    <property type="entry name" value="RNA-binding S4 domain"/>
    <property type="match status" value="1"/>
</dbReference>
<dbReference type="Gene3D" id="1.10.240.10">
    <property type="entry name" value="Tyrosyl-Transfer RNA Synthetase"/>
    <property type="match status" value="1"/>
</dbReference>
<dbReference type="HAMAP" id="MF_02006">
    <property type="entry name" value="Tyr_tRNA_synth_type1"/>
    <property type="match status" value="1"/>
</dbReference>
<dbReference type="InterPro" id="IPR001412">
    <property type="entry name" value="aa-tRNA-synth_I_CS"/>
</dbReference>
<dbReference type="InterPro" id="IPR002305">
    <property type="entry name" value="aa-tRNA-synth_Ic"/>
</dbReference>
<dbReference type="InterPro" id="IPR014729">
    <property type="entry name" value="Rossmann-like_a/b/a_fold"/>
</dbReference>
<dbReference type="InterPro" id="IPR036986">
    <property type="entry name" value="S4_RNA-bd_sf"/>
</dbReference>
<dbReference type="InterPro" id="IPR054608">
    <property type="entry name" value="SYY-like_C"/>
</dbReference>
<dbReference type="InterPro" id="IPR002307">
    <property type="entry name" value="Tyr-tRNA-ligase"/>
</dbReference>
<dbReference type="InterPro" id="IPR024088">
    <property type="entry name" value="Tyr-tRNA-ligase_bac-type"/>
</dbReference>
<dbReference type="InterPro" id="IPR024107">
    <property type="entry name" value="Tyr-tRNA-ligase_bac_1"/>
</dbReference>
<dbReference type="NCBIfam" id="TIGR00234">
    <property type="entry name" value="tyrS"/>
    <property type="match status" value="1"/>
</dbReference>
<dbReference type="PANTHER" id="PTHR11766:SF0">
    <property type="entry name" value="TYROSINE--TRNA LIGASE, MITOCHONDRIAL"/>
    <property type="match status" value="1"/>
</dbReference>
<dbReference type="PANTHER" id="PTHR11766">
    <property type="entry name" value="TYROSYL-TRNA SYNTHETASE"/>
    <property type="match status" value="1"/>
</dbReference>
<dbReference type="Pfam" id="PF22421">
    <property type="entry name" value="SYY_C-terminal"/>
    <property type="match status" value="1"/>
</dbReference>
<dbReference type="Pfam" id="PF00579">
    <property type="entry name" value="tRNA-synt_1b"/>
    <property type="match status" value="1"/>
</dbReference>
<dbReference type="PRINTS" id="PR01040">
    <property type="entry name" value="TRNASYNTHTYR"/>
</dbReference>
<dbReference type="SUPFAM" id="SSF55174">
    <property type="entry name" value="Alpha-L RNA-binding motif"/>
    <property type="match status" value="1"/>
</dbReference>
<dbReference type="SUPFAM" id="SSF52374">
    <property type="entry name" value="Nucleotidylyl transferase"/>
    <property type="match status" value="1"/>
</dbReference>
<dbReference type="PROSITE" id="PS00178">
    <property type="entry name" value="AA_TRNA_LIGASE_I"/>
    <property type="match status" value="1"/>
</dbReference>
<dbReference type="PROSITE" id="PS50889">
    <property type="entry name" value="S4"/>
    <property type="match status" value="1"/>
</dbReference>
<protein>
    <recommendedName>
        <fullName evidence="1">Tyrosine--tRNA ligase</fullName>
        <ecNumber evidence="1">6.1.1.1</ecNumber>
    </recommendedName>
    <alternativeName>
        <fullName evidence="1">Tyrosyl-tRNA synthetase</fullName>
        <shortName evidence="1">TyrRS</shortName>
    </alternativeName>
</protein>
<evidence type="ECO:0000255" key="1">
    <source>
        <dbReference type="HAMAP-Rule" id="MF_02006"/>
    </source>
</evidence>
<accession>B1VAA7</accession>
<keyword id="KW-0030">Aminoacyl-tRNA synthetase</keyword>
<keyword id="KW-0067">ATP-binding</keyword>
<keyword id="KW-0963">Cytoplasm</keyword>
<keyword id="KW-0436">Ligase</keyword>
<keyword id="KW-0547">Nucleotide-binding</keyword>
<keyword id="KW-0648">Protein biosynthesis</keyword>
<keyword id="KW-1185">Reference proteome</keyword>
<keyword id="KW-0694">RNA-binding</keyword>
<proteinExistence type="inferred from homology"/>